<keyword id="KW-0963">Cytoplasm</keyword>
<keyword id="KW-0378">Hydrolase</keyword>
<keyword id="KW-0645">Protease</keyword>
<keyword id="KW-0720">Serine protease</keyword>
<accession>Q3BWQ1</accession>
<reference key="1">
    <citation type="journal article" date="2005" name="J. Bacteriol.">
        <title>Insights into genome plasticity and pathogenicity of the plant pathogenic Bacterium Xanthomonas campestris pv. vesicatoria revealed by the complete genome sequence.</title>
        <authorList>
            <person name="Thieme F."/>
            <person name="Koebnik R."/>
            <person name="Bekel T."/>
            <person name="Berger C."/>
            <person name="Boch J."/>
            <person name="Buettner D."/>
            <person name="Caldana C."/>
            <person name="Gaigalat L."/>
            <person name="Goesmann A."/>
            <person name="Kay S."/>
            <person name="Kirchner O."/>
            <person name="Lanz C."/>
            <person name="Linke B."/>
            <person name="McHardy A.C."/>
            <person name="Meyer F."/>
            <person name="Mittenhuber G."/>
            <person name="Nies D.H."/>
            <person name="Niesbach-Kloesgen U."/>
            <person name="Patschkowski T."/>
            <person name="Rueckert C."/>
            <person name="Rupp O."/>
            <person name="Schneiker S."/>
            <person name="Schuster S.C."/>
            <person name="Vorhoelter F.J."/>
            <person name="Weber E."/>
            <person name="Puehler A."/>
            <person name="Bonas U."/>
            <person name="Bartels D."/>
            <person name="Kaiser O."/>
        </authorList>
    </citation>
    <scope>NUCLEOTIDE SEQUENCE [LARGE SCALE GENOMIC DNA]</scope>
    <source>
        <strain>85-10</strain>
    </source>
</reference>
<protein>
    <recommendedName>
        <fullName evidence="1">ATP-dependent Clp protease proteolytic subunit</fullName>
        <ecNumber evidence="1">3.4.21.92</ecNumber>
    </recommendedName>
    <alternativeName>
        <fullName evidence="1">Endopeptidase Clp</fullName>
    </alternativeName>
</protein>
<comment type="function">
    <text evidence="1">Cleaves peptides in various proteins in a process that requires ATP hydrolysis. Has a chymotrypsin-like activity. Plays a major role in the degradation of misfolded proteins.</text>
</comment>
<comment type="catalytic activity">
    <reaction evidence="1">
        <text>Hydrolysis of proteins to small peptides in the presence of ATP and magnesium. alpha-casein is the usual test substrate. In the absence of ATP, only oligopeptides shorter than five residues are hydrolyzed (such as succinyl-Leu-Tyr-|-NHMec, and Leu-Tyr-Leu-|-Tyr-Trp, in which cleavage of the -Tyr-|-Leu- and -Tyr-|-Trp bonds also occurs).</text>
        <dbReference type="EC" id="3.4.21.92"/>
    </reaction>
</comment>
<comment type="subunit">
    <text evidence="1">Fourteen ClpP subunits assemble into 2 heptameric rings which stack back to back to give a disk-like structure with a central cavity, resembling the structure of eukaryotic proteasomes.</text>
</comment>
<comment type="subcellular location">
    <subcellularLocation>
        <location evidence="1">Cytoplasm</location>
    </subcellularLocation>
</comment>
<comment type="similarity">
    <text evidence="1">Belongs to the peptidase S14 family.</text>
</comment>
<sequence length="208" mass="22796">MSIVTKALNLVPMVVEQTSRGERAYDIYSRLLKERLIFLVGPIDDHMANVIVAQLLFLEADNPEKDISIYINSPGGVVTAGMAIYDTMQYIKPDVSTICVGQAASMGALLLASGAAGKRYALPNSRVMIHQPLGGFQGQATDIDIHAREILTLRSRLNEILAKHTGQSLETIARDTERDNFKSAVDAQAYGLVDQVLERRPEESIQPS</sequence>
<evidence type="ECO:0000255" key="1">
    <source>
        <dbReference type="HAMAP-Rule" id="MF_00444"/>
    </source>
</evidence>
<proteinExistence type="inferred from homology"/>
<name>CLPP_XANE5</name>
<dbReference type="EC" id="3.4.21.92" evidence="1"/>
<dbReference type="EMBL" id="AM039952">
    <property type="protein sequence ID" value="CAJ22712.1"/>
    <property type="molecule type" value="Genomic_DNA"/>
</dbReference>
<dbReference type="RefSeq" id="WP_002806026.1">
    <property type="nucleotide sequence ID" value="NZ_CP017190.1"/>
</dbReference>
<dbReference type="SMR" id="Q3BWQ1"/>
<dbReference type="STRING" id="456327.BJD11_17300"/>
<dbReference type="MEROPS" id="S14.001"/>
<dbReference type="GeneID" id="97509417"/>
<dbReference type="KEGG" id="xcv:XCV1081"/>
<dbReference type="eggNOG" id="COG0740">
    <property type="taxonomic scope" value="Bacteria"/>
</dbReference>
<dbReference type="HOGENOM" id="CLU_058707_3_2_6"/>
<dbReference type="Proteomes" id="UP000007069">
    <property type="component" value="Chromosome"/>
</dbReference>
<dbReference type="GO" id="GO:0005737">
    <property type="term" value="C:cytoplasm"/>
    <property type="evidence" value="ECO:0007669"/>
    <property type="project" value="UniProtKB-SubCell"/>
</dbReference>
<dbReference type="GO" id="GO:0009368">
    <property type="term" value="C:endopeptidase Clp complex"/>
    <property type="evidence" value="ECO:0007669"/>
    <property type="project" value="TreeGrafter"/>
</dbReference>
<dbReference type="GO" id="GO:0004176">
    <property type="term" value="F:ATP-dependent peptidase activity"/>
    <property type="evidence" value="ECO:0007669"/>
    <property type="project" value="InterPro"/>
</dbReference>
<dbReference type="GO" id="GO:0051117">
    <property type="term" value="F:ATPase binding"/>
    <property type="evidence" value="ECO:0007669"/>
    <property type="project" value="TreeGrafter"/>
</dbReference>
<dbReference type="GO" id="GO:0004252">
    <property type="term" value="F:serine-type endopeptidase activity"/>
    <property type="evidence" value="ECO:0007669"/>
    <property type="project" value="UniProtKB-UniRule"/>
</dbReference>
<dbReference type="GO" id="GO:0006515">
    <property type="term" value="P:protein quality control for misfolded or incompletely synthesized proteins"/>
    <property type="evidence" value="ECO:0007669"/>
    <property type="project" value="TreeGrafter"/>
</dbReference>
<dbReference type="CDD" id="cd07017">
    <property type="entry name" value="S14_ClpP_2"/>
    <property type="match status" value="1"/>
</dbReference>
<dbReference type="FunFam" id="3.90.226.10:FF:000001">
    <property type="entry name" value="ATP-dependent Clp protease proteolytic subunit"/>
    <property type="match status" value="1"/>
</dbReference>
<dbReference type="Gene3D" id="3.90.226.10">
    <property type="entry name" value="2-enoyl-CoA Hydratase, Chain A, domain 1"/>
    <property type="match status" value="1"/>
</dbReference>
<dbReference type="HAMAP" id="MF_00444">
    <property type="entry name" value="ClpP"/>
    <property type="match status" value="1"/>
</dbReference>
<dbReference type="InterPro" id="IPR001907">
    <property type="entry name" value="ClpP"/>
</dbReference>
<dbReference type="InterPro" id="IPR029045">
    <property type="entry name" value="ClpP/crotonase-like_dom_sf"/>
</dbReference>
<dbReference type="InterPro" id="IPR023562">
    <property type="entry name" value="ClpP/TepA"/>
</dbReference>
<dbReference type="InterPro" id="IPR033135">
    <property type="entry name" value="ClpP_His_AS"/>
</dbReference>
<dbReference type="InterPro" id="IPR018215">
    <property type="entry name" value="ClpP_Ser_AS"/>
</dbReference>
<dbReference type="NCBIfam" id="TIGR00493">
    <property type="entry name" value="clpP"/>
    <property type="match status" value="1"/>
</dbReference>
<dbReference type="NCBIfam" id="NF001368">
    <property type="entry name" value="PRK00277.1"/>
    <property type="match status" value="1"/>
</dbReference>
<dbReference type="NCBIfam" id="NF009205">
    <property type="entry name" value="PRK12553.1"/>
    <property type="match status" value="1"/>
</dbReference>
<dbReference type="PANTHER" id="PTHR10381">
    <property type="entry name" value="ATP-DEPENDENT CLP PROTEASE PROTEOLYTIC SUBUNIT"/>
    <property type="match status" value="1"/>
</dbReference>
<dbReference type="PANTHER" id="PTHR10381:SF70">
    <property type="entry name" value="ATP-DEPENDENT CLP PROTEASE PROTEOLYTIC SUBUNIT"/>
    <property type="match status" value="1"/>
</dbReference>
<dbReference type="Pfam" id="PF00574">
    <property type="entry name" value="CLP_protease"/>
    <property type="match status" value="1"/>
</dbReference>
<dbReference type="PRINTS" id="PR00127">
    <property type="entry name" value="CLPPROTEASEP"/>
</dbReference>
<dbReference type="SUPFAM" id="SSF52096">
    <property type="entry name" value="ClpP/crotonase"/>
    <property type="match status" value="1"/>
</dbReference>
<dbReference type="PROSITE" id="PS00382">
    <property type="entry name" value="CLP_PROTEASE_HIS"/>
    <property type="match status" value="1"/>
</dbReference>
<dbReference type="PROSITE" id="PS00381">
    <property type="entry name" value="CLP_PROTEASE_SER"/>
    <property type="match status" value="1"/>
</dbReference>
<organism>
    <name type="scientific">Xanthomonas euvesicatoria pv. vesicatoria (strain 85-10)</name>
    <name type="common">Xanthomonas campestris pv. vesicatoria</name>
    <dbReference type="NCBI Taxonomy" id="316273"/>
    <lineage>
        <taxon>Bacteria</taxon>
        <taxon>Pseudomonadati</taxon>
        <taxon>Pseudomonadota</taxon>
        <taxon>Gammaproteobacteria</taxon>
        <taxon>Lysobacterales</taxon>
        <taxon>Lysobacteraceae</taxon>
        <taxon>Xanthomonas</taxon>
    </lineage>
</organism>
<gene>
    <name evidence="1" type="primary">clpP</name>
    <name type="ordered locus">XCV1081</name>
</gene>
<feature type="chain" id="PRO_0000226479" description="ATP-dependent Clp protease proteolytic subunit">
    <location>
        <begin position="1"/>
        <end position="208"/>
    </location>
</feature>
<feature type="active site" description="Nucleophile" evidence="1">
    <location>
        <position position="105"/>
    </location>
</feature>
<feature type="active site" evidence="1">
    <location>
        <position position="130"/>
    </location>
</feature>